<sequence length="317" mass="35496">MSNDRLLQNVVSILLMTGYNVSERCEIRPRSFDLMTSKGENLLVIKVVSQIDSVNEDIAWDLDKIARHLHAVPLIIGERARDVALERGAIYLRYGINAVSSATLYDYLAEGELPLVYASPGGLYVNIDAERLRTLREEQAMSLGDLAHALGVSRRTISKYEGGMGTTLEMAMRLEEFFNDDIVMPIDLLHYTPAEEEHVPASLASGHNPESDAQPKRPEDHLRSIGINVQELRRAPFHAFAMFENKTILTCYGSPQKTVQRAELVGNISQITGTHSLCVVSDYRKEKKIGKTLVIGEERLKNVEDGEDLLEMVTEEK</sequence>
<protein>
    <recommendedName>
        <fullName evidence="1">Putative HTH-type transcriptional regulatory protein Mlab_0160</fullName>
    </recommendedName>
</protein>
<reference key="1">
    <citation type="journal article" date="2009" name="Stand. Genomic Sci.">
        <title>Complete genome sequence of Methanocorpusculum labreanum type strain Z.</title>
        <authorList>
            <person name="Anderson I.J."/>
            <person name="Sieprawska-Lupa M."/>
            <person name="Goltsman E."/>
            <person name="Lapidus A."/>
            <person name="Copeland A."/>
            <person name="Glavina Del Rio T."/>
            <person name="Tice H."/>
            <person name="Dalin E."/>
            <person name="Barry K."/>
            <person name="Pitluck S."/>
            <person name="Hauser L."/>
            <person name="Land M."/>
            <person name="Lucas S."/>
            <person name="Richardson P."/>
            <person name="Whitman W.B."/>
            <person name="Kyrpides N.C."/>
        </authorList>
    </citation>
    <scope>NUCLEOTIDE SEQUENCE [LARGE SCALE GENOMIC DNA]</scope>
    <source>
        <strain>ATCC 43576 / DSM 4855 / Z</strain>
    </source>
</reference>
<keyword id="KW-0238">DNA-binding</keyword>
<keyword id="KW-1185">Reference proteome</keyword>
<keyword id="KW-0804">Transcription</keyword>
<keyword id="KW-0805">Transcription regulation</keyword>
<evidence type="ECO:0000255" key="1">
    <source>
        <dbReference type="HAMAP-Rule" id="MF_00584"/>
    </source>
</evidence>
<evidence type="ECO:0000256" key="2">
    <source>
        <dbReference type="SAM" id="MobiDB-lite"/>
    </source>
</evidence>
<organism>
    <name type="scientific">Methanocorpusculum labreanum (strain ATCC 43576 / DSM 4855 / Z)</name>
    <dbReference type="NCBI Taxonomy" id="410358"/>
    <lineage>
        <taxon>Archaea</taxon>
        <taxon>Methanobacteriati</taxon>
        <taxon>Methanobacteriota</taxon>
        <taxon>Stenosarchaea group</taxon>
        <taxon>Methanomicrobia</taxon>
        <taxon>Methanomicrobiales</taxon>
        <taxon>Methanocorpusculaceae</taxon>
        <taxon>Methanocorpusculum</taxon>
    </lineage>
</organism>
<name>Y160_METLZ</name>
<dbReference type="EMBL" id="CP000559">
    <property type="protein sequence ID" value="ABN06337.1"/>
    <property type="molecule type" value="Genomic_DNA"/>
</dbReference>
<dbReference type="RefSeq" id="WP_011832538.1">
    <property type="nucleotide sequence ID" value="NC_008942.1"/>
</dbReference>
<dbReference type="SMR" id="A2SPT1"/>
<dbReference type="STRING" id="410358.Mlab_0160"/>
<dbReference type="GeneID" id="4795920"/>
<dbReference type="KEGG" id="mla:Mlab_0160"/>
<dbReference type="eggNOG" id="arCOG04152">
    <property type="taxonomic scope" value="Archaea"/>
</dbReference>
<dbReference type="HOGENOM" id="CLU_075726_0_0_2"/>
<dbReference type="OrthoDB" id="31424at2157"/>
<dbReference type="Proteomes" id="UP000000365">
    <property type="component" value="Chromosome"/>
</dbReference>
<dbReference type="GO" id="GO:0003677">
    <property type="term" value="F:DNA binding"/>
    <property type="evidence" value="ECO:0007669"/>
    <property type="project" value="UniProtKB-KW"/>
</dbReference>
<dbReference type="GO" id="GO:0003700">
    <property type="term" value="F:DNA-binding transcription factor activity"/>
    <property type="evidence" value="ECO:0007669"/>
    <property type="project" value="UniProtKB-UniRule"/>
</dbReference>
<dbReference type="CDD" id="cd00093">
    <property type="entry name" value="HTH_XRE"/>
    <property type="match status" value="1"/>
</dbReference>
<dbReference type="Gene3D" id="1.10.260.40">
    <property type="entry name" value="lambda repressor-like DNA-binding domains"/>
    <property type="match status" value="1"/>
</dbReference>
<dbReference type="HAMAP" id="MF_00584">
    <property type="entry name" value="HTH_type_cro_C1"/>
    <property type="match status" value="1"/>
</dbReference>
<dbReference type="InterPro" id="IPR020886">
    <property type="entry name" value="Arc_TR_HTH"/>
</dbReference>
<dbReference type="InterPro" id="IPR001387">
    <property type="entry name" value="Cro/C1-type_HTH"/>
</dbReference>
<dbReference type="InterPro" id="IPR010982">
    <property type="entry name" value="Lambda_DNA-bd_dom_sf"/>
</dbReference>
<dbReference type="NCBIfam" id="NF003162">
    <property type="entry name" value="PRK04140.1"/>
    <property type="match status" value="1"/>
</dbReference>
<dbReference type="Pfam" id="PF01381">
    <property type="entry name" value="HTH_3"/>
    <property type="match status" value="1"/>
</dbReference>
<dbReference type="SMART" id="SM00530">
    <property type="entry name" value="HTH_XRE"/>
    <property type="match status" value="1"/>
</dbReference>
<dbReference type="SUPFAM" id="SSF47413">
    <property type="entry name" value="lambda repressor-like DNA-binding domains"/>
    <property type="match status" value="1"/>
</dbReference>
<dbReference type="PROSITE" id="PS50943">
    <property type="entry name" value="HTH_CROC1"/>
    <property type="match status" value="1"/>
</dbReference>
<gene>
    <name type="ordered locus">Mlab_0160</name>
</gene>
<accession>A2SPT1</accession>
<feature type="chain" id="PRO_1000082408" description="Putative HTH-type transcriptional regulatory protein Mlab_0160">
    <location>
        <begin position="1"/>
        <end position="317"/>
    </location>
</feature>
<feature type="domain" description="HTH cro/C1-type" evidence="1">
    <location>
        <begin position="132"/>
        <end position="189"/>
    </location>
</feature>
<feature type="DNA-binding region" description="H-T-H motif" evidence="1">
    <location>
        <begin position="143"/>
        <end position="162"/>
    </location>
</feature>
<feature type="region of interest" description="Disordered" evidence="2">
    <location>
        <begin position="199"/>
        <end position="219"/>
    </location>
</feature>
<feature type="compositionally biased region" description="Basic and acidic residues" evidence="2">
    <location>
        <begin position="209"/>
        <end position="219"/>
    </location>
</feature>
<proteinExistence type="inferred from homology"/>